<dbReference type="EMBL" id="AE013599">
    <property type="protein sequence ID" value="AAO41361.1"/>
    <property type="molecule type" value="Genomic_DNA"/>
</dbReference>
<dbReference type="RefSeq" id="NP_788394.1">
    <property type="nucleotide sequence ID" value="NM_176214.3"/>
</dbReference>
<dbReference type="SMR" id="Q9V817"/>
<dbReference type="BioGRID" id="62654">
    <property type="interactions" value="1"/>
</dbReference>
<dbReference type="FunCoup" id="Q9V817">
    <property type="interactions" value="12"/>
</dbReference>
<dbReference type="STRING" id="7227.FBpp0086113"/>
<dbReference type="GlyCosmos" id="Q9V817">
    <property type="glycosylation" value="4 sites, No reported glycans"/>
</dbReference>
<dbReference type="GlyGen" id="Q9V817">
    <property type="glycosylation" value="4 sites"/>
</dbReference>
<dbReference type="PaxDb" id="7227-FBpp0086113"/>
<dbReference type="EnsemblMetazoa" id="FBtr0086957">
    <property type="protein sequence ID" value="FBpp0086113"/>
    <property type="gene ID" value="FBgn0034219"/>
</dbReference>
<dbReference type="GeneID" id="36960"/>
<dbReference type="KEGG" id="dme:Dmel_CG6536"/>
<dbReference type="UCSC" id="CG6536-RB">
    <property type="organism name" value="d. melanogaster"/>
</dbReference>
<dbReference type="AGR" id="FB:FBgn0034219"/>
<dbReference type="CTD" id="36960"/>
<dbReference type="FlyBase" id="FBgn0034219">
    <property type="gene designation" value="mthl4"/>
</dbReference>
<dbReference type="VEuPathDB" id="VectorBase:FBgn0034219"/>
<dbReference type="eggNOG" id="KOG4193">
    <property type="taxonomic scope" value="Eukaryota"/>
</dbReference>
<dbReference type="GeneTree" id="ENSGT00940000168274"/>
<dbReference type="HOGENOM" id="CLU_002753_3_0_1"/>
<dbReference type="InParanoid" id="Q9V817"/>
<dbReference type="OMA" id="THTACEG"/>
<dbReference type="OrthoDB" id="6134459at2759"/>
<dbReference type="PhylomeDB" id="Q9V817"/>
<dbReference type="BioGRID-ORCS" id="36960">
    <property type="hits" value="0 hits in 1 CRISPR screen"/>
</dbReference>
<dbReference type="GenomeRNAi" id="36960"/>
<dbReference type="PRO" id="PR:Q9V817"/>
<dbReference type="Proteomes" id="UP000000803">
    <property type="component" value="Chromosome 2R"/>
</dbReference>
<dbReference type="Bgee" id="FBgn0034219">
    <property type="expression patterns" value="Expressed in visceral muscle cell in digestive tract and 70 other cell types or tissues"/>
</dbReference>
<dbReference type="ExpressionAtlas" id="Q9V817">
    <property type="expression patterns" value="baseline and differential"/>
</dbReference>
<dbReference type="GO" id="GO:0016020">
    <property type="term" value="C:membrane"/>
    <property type="evidence" value="ECO:0000250"/>
    <property type="project" value="FlyBase"/>
</dbReference>
<dbReference type="GO" id="GO:0005886">
    <property type="term" value="C:plasma membrane"/>
    <property type="evidence" value="ECO:0000318"/>
    <property type="project" value="GO_Central"/>
</dbReference>
<dbReference type="GO" id="GO:0008528">
    <property type="term" value="F:G protein-coupled peptide receptor activity"/>
    <property type="evidence" value="ECO:0000318"/>
    <property type="project" value="GO_Central"/>
</dbReference>
<dbReference type="GO" id="GO:0004930">
    <property type="term" value="F:G protein-coupled receptor activity"/>
    <property type="evidence" value="ECO:0000250"/>
    <property type="project" value="FlyBase"/>
</dbReference>
<dbReference type="GO" id="GO:0007166">
    <property type="term" value="P:cell surface receptor signaling pathway"/>
    <property type="evidence" value="ECO:0007669"/>
    <property type="project" value="InterPro"/>
</dbReference>
<dbReference type="GO" id="GO:0008340">
    <property type="term" value="P:determination of adult lifespan"/>
    <property type="evidence" value="ECO:0000250"/>
    <property type="project" value="UniProtKB"/>
</dbReference>
<dbReference type="GO" id="GO:0007186">
    <property type="term" value="P:G protein-coupled receptor signaling pathway"/>
    <property type="evidence" value="ECO:0000250"/>
    <property type="project" value="FlyBase"/>
</dbReference>
<dbReference type="GO" id="GO:0042594">
    <property type="term" value="P:response to starvation"/>
    <property type="evidence" value="ECO:0000250"/>
    <property type="project" value="UniProtKB"/>
</dbReference>
<dbReference type="CDD" id="cd15039">
    <property type="entry name" value="7tmB3_Methuselah-like"/>
    <property type="match status" value="1"/>
</dbReference>
<dbReference type="CDD" id="cd00251">
    <property type="entry name" value="Mth_Ecto"/>
    <property type="match status" value="1"/>
</dbReference>
<dbReference type="FunFam" id="1.20.1070.10:FF:000297">
    <property type="entry name" value="G-protein coupled receptor Mth"/>
    <property type="match status" value="1"/>
</dbReference>
<dbReference type="FunFam" id="2.170.180.11:FF:000001">
    <property type="entry name" value="G-protein coupled receptor Mth"/>
    <property type="match status" value="1"/>
</dbReference>
<dbReference type="FunFam" id="2.30.160.11:FF:000001">
    <property type="entry name" value="G-protein coupled receptor Mth"/>
    <property type="match status" value="1"/>
</dbReference>
<dbReference type="Gene3D" id="2.30.160.11">
    <property type="match status" value="1"/>
</dbReference>
<dbReference type="Gene3D" id="2.170.180.11">
    <property type="entry name" value="Methuselah ectodomain, domain 2"/>
    <property type="match status" value="1"/>
</dbReference>
<dbReference type="Gene3D" id="1.20.1070.10">
    <property type="entry name" value="Rhodopsin 7-helix transmembrane proteins"/>
    <property type="match status" value="1"/>
</dbReference>
<dbReference type="InterPro" id="IPR017981">
    <property type="entry name" value="GPCR_2-like_7TM"/>
</dbReference>
<dbReference type="InterPro" id="IPR000832">
    <property type="entry name" value="GPCR_2_secretin-like"/>
</dbReference>
<dbReference type="InterPro" id="IPR044860">
    <property type="entry name" value="Methusela_ecto_dom_1"/>
</dbReference>
<dbReference type="InterPro" id="IPR023311">
    <property type="entry name" value="Methusela_ecto_dom_2"/>
</dbReference>
<dbReference type="InterPro" id="IPR010596">
    <property type="entry name" value="Methuselah_N_dom"/>
</dbReference>
<dbReference type="InterPro" id="IPR036272">
    <property type="entry name" value="Methuselah_N_sf"/>
</dbReference>
<dbReference type="InterPro" id="IPR051384">
    <property type="entry name" value="Mth_GPCR"/>
</dbReference>
<dbReference type="PANTHER" id="PTHR47154">
    <property type="entry name" value="G-PROTEIN COUPLED RECEPTOR MTH-RELATED"/>
    <property type="match status" value="1"/>
</dbReference>
<dbReference type="PANTHER" id="PTHR47154:SF2">
    <property type="entry name" value="G-PROTEIN COUPLED RECEPTOR MTH-RELATED"/>
    <property type="match status" value="1"/>
</dbReference>
<dbReference type="Pfam" id="PF00002">
    <property type="entry name" value="7tm_2"/>
    <property type="match status" value="1"/>
</dbReference>
<dbReference type="Pfam" id="PF06652">
    <property type="entry name" value="Methuselah_N"/>
    <property type="match status" value="1"/>
</dbReference>
<dbReference type="SUPFAM" id="SSF63877">
    <property type="entry name" value="Methuselah ectodomain"/>
    <property type="match status" value="1"/>
</dbReference>
<dbReference type="PROSITE" id="PS50261">
    <property type="entry name" value="G_PROTEIN_RECEP_F2_4"/>
    <property type="match status" value="1"/>
</dbReference>
<keyword id="KW-1003">Cell membrane</keyword>
<keyword id="KW-1015">Disulfide bond</keyword>
<keyword id="KW-0297">G-protein coupled receptor</keyword>
<keyword id="KW-0325">Glycoprotein</keyword>
<keyword id="KW-0472">Membrane</keyword>
<keyword id="KW-0675">Receptor</keyword>
<keyword id="KW-1185">Reference proteome</keyword>
<keyword id="KW-0732">Signal</keyword>
<keyword id="KW-0807">Transducer</keyword>
<keyword id="KW-0812">Transmembrane</keyword>
<keyword id="KW-1133">Transmembrane helix</keyword>
<evidence type="ECO:0000250" key="1">
    <source>
        <dbReference type="UniProtKB" id="O97148"/>
    </source>
</evidence>
<evidence type="ECO:0000255" key="2"/>
<evidence type="ECO:0000305" key="3"/>
<feature type="signal peptide" evidence="2">
    <location>
        <begin position="1"/>
        <end position="18"/>
    </location>
</feature>
<feature type="chain" id="PRO_0000013026" description="Probable G-protein coupled receptor Mth-like 4">
    <location>
        <begin position="19"/>
        <end position="517"/>
    </location>
</feature>
<feature type="topological domain" description="Extracellular" evidence="2">
    <location>
        <begin position="19"/>
        <end position="212"/>
    </location>
</feature>
<feature type="transmembrane region" description="Helical; Name=1" evidence="2">
    <location>
        <begin position="213"/>
        <end position="233"/>
    </location>
</feature>
<feature type="topological domain" description="Cytoplasmic" evidence="2">
    <location>
        <begin position="234"/>
        <end position="242"/>
    </location>
</feature>
<feature type="transmembrane region" description="Helical; Name=2" evidence="2">
    <location>
        <begin position="243"/>
        <end position="263"/>
    </location>
</feature>
<feature type="topological domain" description="Extracellular" evidence="2">
    <location>
        <begin position="264"/>
        <end position="272"/>
    </location>
</feature>
<feature type="transmembrane region" description="Helical; Name=3" evidence="2">
    <location>
        <begin position="273"/>
        <end position="293"/>
    </location>
</feature>
<feature type="topological domain" description="Cytoplasmic" evidence="2">
    <location>
        <begin position="294"/>
        <end position="319"/>
    </location>
</feature>
<feature type="transmembrane region" description="Helical; Name=4" evidence="2">
    <location>
        <begin position="320"/>
        <end position="340"/>
    </location>
</feature>
<feature type="topological domain" description="Extracellular" evidence="2">
    <location>
        <begin position="341"/>
        <end position="363"/>
    </location>
</feature>
<feature type="transmembrane region" description="Helical; Name=5" evidence="2">
    <location>
        <begin position="364"/>
        <end position="384"/>
    </location>
</feature>
<feature type="topological domain" description="Cytoplasmic" evidence="2">
    <location>
        <begin position="385"/>
        <end position="414"/>
    </location>
</feature>
<feature type="transmembrane region" description="Helical; Name=6" evidence="2">
    <location>
        <begin position="415"/>
        <end position="435"/>
    </location>
</feature>
<feature type="topological domain" description="Extracellular" evidence="2">
    <location>
        <begin position="436"/>
        <end position="459"/>
    </location>
</feature>
<feature type="transmembrane region" description="Helical; Name=7" evidence="2">
    <location>
        <begin position="460"/>
        <end position="480"/>
    </location>
</feature>
<feature type="topological domain" description="Cytoplasmic" evidence="2">
    <location>
        <begin position="481"/>
        <end position="517"/>
    </location>
</feature>
<feature type="glycosylation site" description="N-linked (GlcNAc...) asparagine" evidence="2">
    <location>
        <position position="39"/>
    </location>
</feature>
<feature type="glycosylation site" description="N-linked (GlcNAc...) asparagine" evidence="2">
    <location>
        <position position="117"/>
    </location>
</feature>
<feature type="glycosylation site" description="N-linked (GlcNAc...) asparagine" evidence="2">
    <location>
        <position position="165"/>
    </location>
</feature>
<feature type="glycosylation site" description="N-linked (GlcNAc...) asparagine" evidence="2">
    <location>
        <position position="456"/>
    </location>
</feature>
<feature type="disulfide bond" evidence="1">
    <location>
        <begin position="23"/>
        <end position="77"/>
    </location>
</feature>
<feature type="disulfide bond" evidence="1">
    <location>
        <begin position="79"/>
        <end position="84"/>
    </location>
</feature>
<feature type="disulfide bond" evidence="1">
    <location>
        <begin position="88"/>
        <end position="183"/>
    </location>
</feature>
<feature type="disulfide bond" evidence="1">
    <location>
        <begin position="89"/>
        <end position="100"/>
    </location>
</feature>
<feature type="disulfide bond" evidence="1">
    <location>
        <begin position="145"/>
        <end position="201"/>
    </location>
</feature>
<proteinExistence type="inferred from homology"/>
<name>MTH4_DROME</name>
<reference key="1">
    <citation type="journal article" date="2000" name="Science">
        <title>The genome sequence of Drosophila melanogaster.</title>
        <authorList>
            <person name="Adams M.D."/>
            <person name="Celniker S.E."/>
            <person name="Holt R.A."/>
            <person name="Evans C.A."/>
            <person name="Gocayne J.D."/>
            <person name="Amanatides P.G."/>
            <person name="Scherer S.E."/>
            <person name="Li P.W."/>
            <person name="Hoskins R.A."/>
            <person name="Galle R.F."/>
            <person name="George R.A."/>
            <person name="Lewis S.E."/>
            <person name="Richards S."/>
            <person name="Ashburner M."/>
            <person name="Henderson S.N."/>
            <person name="Sutton G.G."/>
            <person name="Wortman J.R."/>
            <person name="Yandell M.D."/>
            <person name="Zhang Q."/>
            <person name="Chen L.X."/>
            <person name="Brandon R.C."/>
            <person name="Rogers Y.-H.C."/>
            <person name="Blazej R.G."/>
            <person name="Champe M."/>
            <person name="Pfeiffer B.D."/>
            <person name="Wan K.H."/>
            <person name="Doyle C."/>
            <person name="Baxter E.G."/>
            <person name="Helt G."/>
            <person name="Nelson C.R."/>
            <person name="Miklos G.L.G."/>
            <person name="Abril J.F."/>
            <person name="Agbayani A."/>
            <person name="An H.-J."/>
            <person name="Andrews-Pfannkoch C."/>
            <person name="Baldwin D."/>
            <person name="Ballew R.M."/>
            <person name="Basu A."/>
            <person name="Baxendale J."/>
            <person name="Bayraktaroglu L."/>
            <person name="Beasley E.M."/>
            <person name="Beeson K.Y."/>
            <person name="Benos P.V."/>
            <person name="Berman B.P."/>
            <person name="Bhandari D."/>
            <person name="Bolshakov S."/>
            <person name="Borkova D."/>
            <person name="Botchan M.R."/>
            <person name="Bouck J."/>
            <person name="Brokstein P."/>
            <person name="Brottier P."/>
            <person name="Burtis K.C."/>
            <person name="Busam D.A."/>
            <person name="Butler H."/>
            <person name="Cadieu E."/>
            <person name="Center A."/>
            <person name="Chandra I."/>
            <person name="Cherry J.M."/>
            <person name="Cawley S."/>
            <person name="Dahlke C."/>
            <person name="Davenport L.B."/>
            <person name="Davies P."/>
            <person name="de Pablos B."/>
            <person name="Delcher A."/>
            <person name="Deng Z."/>
            <person name="Mays A.D."/>
            <person name="Dew I."/>
            <person name="Dietz S.M."/>
            <person name="Dodson K."/>
            <person name="Doup L.E."/>
            <person name="Downes M."/>
            <person name="Dugan-Rocha S."/>
            <person name="Dunkov B.C."/>
            <person name="Dunn P."/>
            <person name="Durbin K.J."/>
            <person name="Evangelista C.C."/>
            <person name="Ferraz C."/>
            <person name="Ferriera S."/>
            <person name="Fleischmann W."/>
            <person name="Fosler C."/>
            <person name="Gabrielian A.E."/>
            <person name="Garg N.S."/>
            <person name="Gelbart W.M."/>
            <person name="Glasser K."/>
            <person name="Glodek A."/>
            <person name="Gong F."/>
            <person name="Gorrell J.H."/>
            <person name="Gu Z."/>
            <person name="Guan P."/>
            <person name="Harris M."/>
            <person name="Harris N.L."/>
            <person name="Harvey D.A."/>
            <person name="Heiman T.J."/>
            <person name="Hernandez J.R."/>
            <person name="Houck J."/>
            <person name="Hostin D."/>
            <person name="Houston K.A."/>
            <person name="Howland T.J."/>
            <person name="Wei M.-H."/>
            <person name="Ibegwam C."/>
            <person name="Jalali M."/>
            <person name="Kalush F."/>
            <person name="Karpen G.H."/>
            <person name="Ke Z."/>
            <person name="Kennison J.A."/>
            <person name="Ketchum K.A."/>
            <person name="Kimmel B.E."/>
            <person name="Kodira C.D."/>
            <person name="Kraft C.L."/>
            <person name="Kravitz S."/>
            <person name="Kulp D."/>
            <person name="Lai Z."/>
            <person name="Lasko P."/>
            <person name="Lei Y."/>
            <person name="Levitsky A.A."/>
            <person name="Li J.H."/>
            <person name="Li Z."/>
            <person name="Liang Y."/>
            <person name="Lin X."/>
            <person name="Liu X."/>
            <person name="Mattei B."/>
            <person name="McIntosh T.C."/>
            <person name="McLeod M.P."/>
            <person name="McPherson D."/>
            <person name="Merkulov G."/>
            <person name="Milshina N.V."/>
            <person name="Mobarry C."/>
            <person name="Morris J."/>
            <person name="Moshrefi A."/>
            <person name="Mount S.M."/>
            <person name="Moy M."/>
            <person name="Murphy B."/>
            <person name="Murphy L."/>
            <person name="Muzny D.M."/>
            <person name="Nelson D.L."/>
            <person name="Nelson D.R."/>
            <person name="Nelson K.A."/>
            <person name="Nixon K."/>
            <person name="Nusskern D.R."/>
            <person name="Pacleb J.M."/>
            <person name="Palazzolo M."/>
            <person name="Pittman G.S."/>
            <person name="Pan S."/>
            <person name="Pollard J."/>
            <person name="Puri V."/>
            <person name="Reese M.G."/>
            <person name="Reinert K."/>
            <person name="Remington K."/>
            <person name="Saunders R.D.C."/>
            <person name="Scheeler F."/>
            <person name="Shen H."/>
            <person name="Shue B.C."/>
            <person name="Siden-Kiamos I."/>
            <person name="Simpson M."/>
            <person name="Skupski M.P."/>
            <person name="Smith T.J."/>
            <person name="Spier E."/>
            <person name="Spradling A.C."/>
            <person name="Stapleton M."/>
            <person name="Strong R."/>
            <person name="Sun E."/>
            <person name="Svirskas R."/>
            <person name="Tector C."/>
            <person name="Turner R."/>
            <person name="Venter E."/>
            <person name="Wang A.H."/>
            <person name="Wang X."/>
            <person name="Wang Z.-Y."/>
            <person name="Wassarman D.A."/>
            <person name="Weinstock G.M."/>
            <person name="Weissenbach J."/>
            <person name="Williams S.M."/>
            <person name="Woodage T."/>
            <person name="Worley K.C."/>
            <person name="Wu D."/>
            <person name="Yang S."/>
            <person name="Yao Q.A."/>
            <person name="Ye J."/>
            <person name="Yeh R.-F."/>
            <person name="Zaveri J.S."/>
            <person name="Zhan M."/>
            <person name="Zhang G."/>
            <person name="Zhao Q."/>
            <person name="Zheng L."/>
            <person name="Zheng X.H."/>
            <person name="Zhong F.N."/>
            <person name="Zhong W."/>
            <person name="Zhou X."/>
            <person name="Zhu S.C."/>
            <person name="Zhu X."/>
            <person name="Smith H.O."/>
            <person name="Gibbs R.A."/>
            <person name="Myers E.W."/>
            <person name="Rubin G.M."/>
            <person name="Venter J.C."/>
        </authorList>
    </citation>
    <scope>NUCLEOTIDE SEQUENCE [LARGE SCALE GENOMIC DNA]</scope>
    <source>
        <strain>Berkeley</strain>
    </source>
</reference>
<reference key="2">
    <citation type="journal article" date="2002" name="Genome Biol.">
        <title>Annotation of the Drosophila melanogaster euchromatic genome: a systematic review.</title>
        <authorList>
            <person name="Misra S."/>
            <person name="Crosby M.A."/>
            <person name="Mungall C.J."/>
            <person name="Matthews B.B."/>
            <person name="Campbell K.S."/>
            <person name="Hradecky P."/>
            <person name="Huang Y."/>
            <person name="Kaminker J.S."/>
            <person name="Millburn G.H."/>
            <person name="Prochnik S.E."/>
            <person name="Smith C.D."/>
            <person name="Tupy J.L."/>
            <person name="Whitfield E.J."/>
            <person name="Bayraktaroglu L."/>
            <person name="Berman B.P."/>
            <person name="Bettencourt B.R."/>
            <person name="Celniker S.E."/>
            <person name="de Grey A.D.N.J."/>
            <person name="Drysdale R.A."/>
            <person name="Harris N.L."/>
            <person name="Richter J."/>
            <person name="Russo S."/>
            <person name="Schroeder A.J."/>
            <person name="Shu S.Q."/>
            <person name="Stapleton M."/>
            <person name="Yamada C."/>
            <person name="Ashburner M."/>
            <person name="Gelbart W.M."/>
            <person name="Rubin G.M."/>
            <person name="Lewis S.E."/>
        </authorList>
    </citation>
    <scope>GENOME REANNOTATION</scope>
    <source>
        <strain>Berkeley</strain>
    </source>
</reference>
<reference key="3">
    <citation type="journal article" date="2000" name="J. Cell Biol.">
        <title>Drosophila melanogaster G protein-coupled receptors.</title>
        <authorList>
            <person name="Brody T."/>
            <person name="Cravchik A."/>
        </authorList>
    </citation>
    <scope>REVIEW</scope>
</reference>
<accession>Q9V817</accession>
<accession>A1ZAT1</accession>
<organism>
    <name type="scientific">Drosophila melanogaster</name>
    <name type="common">Fruit fly</name>
    <dbReference type="NCBI Taxonomy" id="7227"/>
    <lineage>
        <taxon>Eukaryota</taxon>
        <taxon>Metazoa</taxon>
        <taxon>Ecdysozoa</taxon>
        <taxon>Arthropoda</taxon>
        <taxon>Hexapoda</taxon>
        <taxon>Insecta</taxon>
        <taxon>Pterygota</taxon>
        <taxon>Neoptera</taxon>
        <taxon>Endopterygota</taxon>
        <taxon>Diptera</taxon>
        <taxon>Brachycera</taxon>
        <taxon>Muscomorpha</taxon>
        <taxon>Ephydroidea</taxon>
        <taxon>Drosophilidae</taxon>
        <taxon>Drosophila</taxon>
        <taxon>Sophophora</taxon>
    </lineage>
</organism>
<protein>
    <recommendedName>
        <fullName>Probable G-protein coupled receptor Mth-like 4</fullName>
    </recommendedName>
    <alternativeName>
        <fullName>Protein methuselah-like 4</fullName>
    </alternativeName>
</protein>
<sequence>MRILLIAVLFLLMPKSNAEIPGCDFFDTVDISKAPRFSNGSYLYEGLLIPAHLTAEYDYKLLADDSKEKVASHVRGCACHLRPCIRFCCPQYQKMQKSKCYGDMSEDELNKHDPFVNVTLSDGSVVRRHFKEDLIVQSDLAKPGCPRMYFLNHELPGNEFTLFENGSLLRHWDKVELSKREYCVQHLSFKDDSIRIAPHFCPLSSEHSRTWKTVAIVISLICIILTISVYLYVEKLRNLHGKCFICYLASLFLGYFFLVLNVWKYSSGFCVTAGFLGYFSVMAAFFWLSVIGIHLRIKFSLASNCLHRLLPENPFRAYNLYAWGIPLIMTAITYTADQVVKNEKLRPRVGVGKNCWIYTGDMTVMIYFYGPMLLLIAFNIIMFVLSAIYIYNIKKNVKGLVHKQQTNQQINDQQMFAIFLRLFILMGLSWSFEILSFLLTKQQAWARALMVADYFNWSQGTIIFVLFILKPSILKLIIAGGRQNLPGSHHNSRSKAARYNSTHTACEGSIADPNAYC</sequence>
<gene>
    <name type="primary">mthl4</name>
    <name type="ORF">CG6536</name>
</gene>
<comment type="subcellular location">
    <subcellularLocation>
        <location evidence="3">Cell membrane</location>
        <topology evidence="3">Multi-pass membrane protein</topology>
    </subcellularLocation>
</comment>
<comment type="similarity">
    <text evidence="3">Belongs to the G-protein coupled receptor 2 family. Mth subfamily.</text>
</comment>